<reference key="1">
    <citation type="journal article" date="1998" name="DNA Res.">
        <title>Structural analysis of Arabidopsis thaliana chromosome 5. V. Sequence features of the regions of 1,381,565 bp covered by twenty one physically assigned P1 and TAC clones.</title>
        <authorList>
            <person name="Kaneko T."/>
            <person name="Kotani H."/>
            <person name="Nakamura Y."/>
            <person name="Sato S."/>
            <person name="Asamizu E."/>
            <person name="Miyajima N."/>
            <person name="Tabata S."/>
        </authorList>
    </citation>
    <scope>NUCLEOTIDE SEQUENCE [LARGE SCALE GENOMIC DNA]</scope>
    <source>
        <strain>cv. Columbia</strain>
    </source>
</reference>
<reference key="2">
    <citation type="journal article" date="2017" name="Plant J.">
        <title>Araport11: a complete reannotation of the Arabidopsis thaliana reference genome.</title>
        <authorList>
            <person name="Cheng C.Y."/>
            <person name="Krishnakumar V."/>
            <person name="Chan A.P."/>
            <person name="Thibaud-Nissen F."/>
            <person name="Schobel S."/>
            <person name="Town C.D."/>
        </authorList>
    </citation>
    <scope>GENOME REANNOTATION</scope>
    <source>
        <strain>cv. Columbia</strain>
    </source>
</reference>
<reference key="3">
    <citation type="journal article" date="2003" name="Science">
        <title>Empirical analysis of transcriptional activity in the Arabidopsis genome.</title>
        <authorList>
            <person name="Yamada K."/>
            <person name="Lim J."/>
            <person name="Dale J.M."/>
            <person name="Chen H."/>
            <person name="Shinn P."/>
            <person name="Palm C.J."/>
            <person name="Southwick A.M."/>
            <person name="Wu H.C."/>
            <person name="Kim C.J."/>
            <person name="Nguyen M."/>
            <person name="Pham P.K."/>
            <person name="Cheuk R.F."/>
            <person name="Karlin-Newmann G."/>
            <person name="Liu S.X."/>
            <person name="Lam B."/>
            <person name="Sakano H."/>
            <person name="Wu T."/>
            <person name="Yu G."/>
            <person name="Miranda M."/>
            <person name="Quach H.L."/>
            <person name="Tripp M."/>
            <person name="Chang C.H."/>
            <person name="Lee J.M."/>
            <person name="Toriumi M.J."/>
            <person name="Chan M.M."/>
            <person name="Tang C.C."/>
            <person name="Onodera C.S."/>
            <person name="Deng J.M."/>
            <person name="Akiyama K."/>
            <person name="Ansari Y."/>
            <person name="Arakawa T."/>
            <person name="Banh J."/>
            <person name="Banno F."/>
            <person name="Bowser L."/>
            <person name="Brooks S.Y."/>
            <person name="Carninci P."/>
            <person name="Chao Q."/>
            <person name="Choy N."/>
            <person name="Enju A."/>
            <person name="Goldsmith A.D."/>
            <person name="Gurjal M."/>
            <person name="Hansen N.F."/>
            <person name="Hayashizaki Y."/>
            <person name="Johnson-Hopson C."/>
            <person name="Hsuan V.W."/>
            <person name="Iida K."/>
            <person name="Karnes M."/>
            <person name="Khan S."/>
            <person name="Koesema E."/>
            <person name="Ishida J."/>
            <person name="Jiang P.X."/>
            <person name="Jones T."/>
            <person name="Kawai J."/>
            <person name="Kamiya A."/>
            <person name="Meyers C."/>
            <person name="Nakajima M."/>
            <person name="Narusaka M."/>
            <person name="Seki M."/>
            <person name="Sakurai T."/>
            <person name="Satou M."/>
            <person name="Tamse R."/>
            <person name="Vaysberg M."/>
            <person name="Wallender E.K."/>
            <person name="Wong C."/>
            <person name="Yamamura Y."/>
            <person name="Yuan S."/>
            <person name="Shinozaki K."/>
            <person name="Davis R.W."/>
            <person name="Theologis A."/>
            <person name="Ecker J.R."/>
        </authorList>
    </citation>
    <scope>NUCLEOTIDE SEQUENCE [LARGE SCALE MRNA] (ISOFORM 1)</scope>
    <source>
        <strain>cv. Columbia</strain>
    </source>
</reference>
<reference key="4">
    <citation type="journal article" date="2013" name="Proc. Natl. Acad. Sci. U.S.A.">
        <title>LNK genes integrate light and clock signaling networks at the core of the Arabidopsis oscillator.</title>
        <authorList>
            <person name="Rugnone M.L."/>
            <person name="Faigon Soverna A."/>
            <person name="Sanchez S.E."/>
            <person name="Schlaen R.G."/>
            <person name="Hernando C.E."/>
            <person name="Seymour D.K."/>
            <person name="Mancini E."/>
            <person name="Chernomoretz A."/>
            <person name="Weigel D."/>
            <person name="Mas P."/>
            <person name="Yanovsky M.J."/>
        </authorList>
    </citation>
    <scope>INDUCTION</scope>
    <scope>GENE FAMILY</scope>
    <scope>NOMENCLATURE</scope>
</reference>
<reference key="5">
    <citation type="journal article" date="2014" name="Plant Cell">
        <title>LNK1 and LNK2 are transcriptional coactivators in the Arabidopsis circadian oscillator.</title>
        <authorList>
            <person name="Xie Q."/>
            <person name="Wang P."/>
            <person name="Liu X."/>
            <person name="Yuan L."/>
            <person name="Wang L."/>
            <person name="Zhang C."/>
            <person name="Li Y."/>
            <person name="Xing H."/>
            <person name="Zhi L."/>
            <person name="Yue Z."/>
            <person name="Zhao C."/>
            <person name="McClung C.R."/>
            <person name="Xu X."/>
        </authorList>
    </citation>
    <scope>DISRUPTION PHENOTYPE</scope>
</reference>
<reference key="6">
    <citation type="journal article" date="2015" name="Proc. Natl. Acad. Sci. U.S.A.">
        <title>Time-dependent sequestration of RVE8 by LNK proteins shapes the diurnal oscillation of anthocyanin biosynthesis.</title>
        <authorList>
            <person name="Perez-Garcia P."/>
            <person name="Ma Y."/>
            <person name="Yanovsky M.J."/>
            <person name="Mas P."/>
        </authorList>
    </citation>
    <scope>INTERACTION WITH RVE8</scope>
</reference>
<keyword id="KW-0010">Activator</keyword>
<keyword id="KW-0025">Alternative splicing</keyword>
<keyword id="KW-1185">Reference proteome</keyword>
<keyword id="KW-0804">Transcription</keyword>
<keyword id="KW-0805">Transcription regulation</keyword>
<sequence length="274" mass="32040">MDRYSRRNLEDLVVPNYQETSDSYPSPDMWGTGWSMNSSEAAEKCFDYDVIHNGFSGGLYSQMEMDMGTSEQVEEETKKLKASGCFDRSLHDFDEIQHMDDMFLSSILEDVPGNENFLSFKESDNNNSSSSSYLDTTDGREVPLFHYNWETCQDMPLMEEDAPMNLCEENKEEASAEEVVLQDLQRATEMLTDDTRKCFRDTFYRLAKNSQQKSDSNSDEFLEDRTRETEFETKLNRQSRGQSHIQQDGIQHEKYASTEETFFCSRIREFHHIW</sequence>
<accession>Q9FL48</accession>
<accession>F4K5B1</accession>
<accession>F4K5B3</accession>
<accession>F4K5B4</accession>
<accession>Q94B51</accession>
<organism>
    <name type="scientific">Arabidopsis thaliana</name>
    <name type="common">Mouse-ear cress</name>
    <dbReference type="NCBI Taxonomy" id="3702"/>
    <lineage>
        <taxon>Eukaryota</taxon>
        <taxon>Viridiplantae</taxon>
        <taxon>Streptophyta</taxon>
        <taxon>Embryophyta</taxon>
        <taxon>Tracheophyta</taxon>
        <taxon>Spermatophyta</taxon>
        <taxon>Magnoliopsida</taxon>
        <taxon>eudicotyledons</taxon>
        <taxon>Gunneridae</taxon>
        <taxon>Pentapetalae</taxon>
        <taxon>rosids</taxon>
        <taxon>malvids</taxon>
        <taxon>Brassicales</taxon>
        <taxon>Brassicaceae</taxon>
        <taxon>Camelineae</taxon>
        <taxon>Arabidopsis</taxon>
    </lineage>
</organism>
<comment type="function">
    <text evidence="1">Probable transcriptional coactivator.</text>
</comment>
<comment type="subunit">
    <text evidence="5">Interacts with REV8.</text>
</comment>
<comment type="alternative products">
    <event type="alternative splicing"/>
    <isoform>
        <id>Q9FL48-1</id>
        <name>1</name>
        <sequence type="displayed"/>
    </isoform>
    <isoform>
        <id>Q9FL48-2</id>
        <name>2</name>
        <sequence type="described" ref="VSP_058223"/>
    </isoform>
    <isoform>
        <id>Q9FL48-3</id>
        <name>3</name>
        <sequence type="described" ref="VSP_058222"/>
    </isoform>
    <isoform>
        <id>Q9FL48-4</id>
        <name>4</name>
        <sequence type="described" ref="VSP_058221 VSP_058224"/>
    </isoform>
</comment>
<comment type="induction">
    <text evidence="3">Repressed by members of the TOC1/PRR1 family of clock genes.</text>
</comment>
<comment type="disruption phenotype">
    <text evidence="4">No effect on circadian clock.</text>
</comment>
<comment type="sequence caution" evidence="7">
    <conflict type="erroneous initiation">
        <sequence resource="EMBL-CDS" id="AAK68789"/>
    </conflict>
    <text>Truncated N-terminus.</text>
</comment>
<protein>
    <recommendedName>
        <fullName evidence="6">Protein LNK4</fullName>
    </recommendedName>
    <alternativeName>
        <fullName evidence="6">Night light-inducible and clock-regulated 4</fullName>
    </alternativeName>
</protein>
<proteinExistence type="evidence at protein level"/>
<evidence type="ECO:0000250" key="1">
    <source>
        <dbReference type="UniProtKB" id="A8MQN2"/>
    </source>
</evidence>
<evidence type="ECO:0000256" key="2">
    <source>
        <dbReference type="SAM" id="MobiDB-lite"/>
    </source>
</evidence>
<evidence type="ECO:0000269" key="3">
    <source>
    </source>
</evidence>
<evidence type="ECO:0000269" key="4">
    <source>
    </source>
</evidence>
<evidence type="ECO:0000269" key="5">
    <source>
    </source>
</evidence>
<evidence type="ECO:0000303" key="6">
    <source>
    </source>
</evidence>
<evidence type="ECO:0000305" key="7"/>
<evidence type="ECO:0000312" key="8">
    <source>
        <dbReference type="Araport" id="AT5G06980"/>
    </source>
</evidence>
<evidence type="ECO:0000312" key="9">
    <source>
        <dbReference type="EMBL" id="BAB11156.1"/>
    </source>
</evidence>
<feature type="chain" id="PRO_0000436034" description="Protein LNK4">
    <location>
        <begin position="1"/>
        <end position="274"/>
    </location>
</feature>
<feature type="region of interest" description="Disordered" evidence="2">
    <location>
        <begin position="209"/>
        <end position="249"/>
    </location>
</feature>
<feature type="compositionally biased region" description="Basic and acidic residues" evidence="2">
    <location>
        <begin position="223"/>
        <end position="235"/>
    </location>
</feature>
<feature type="compositionally biased region" description="Polar residues" evidence="2">
    <location>
        <begin position="236"/>
        <end position="249"/>
    </location>
</feature>
<feature type="splice variant" id="VSP_058221" description="In isoform 4.">
    <original>LS</original>
    <variation>F</variation>
    <location>
        <begin position="104"/>
        <end position="105"/>
    </location>
</feature>
<feature type="splice variant" id="VSP_058222" description="In isoform 3.">
    <original>KSDSNSDEFLEDRTRETEFETKLNRQSRGQSHIQQDGIQHEKYASTEETFFCSRIREFHHIW</original>
    <variation>NSNDSSPSMTFLSVGKLNLKPNSIDRAVANLTFNKMESNMRNMPPPKRLSSVQG</variation>
    <location>
        <begin position="213"/>
        <end position="274"/>
    </location>
</feature>
<feature type="splice variant" id="VSP_058223" description="In isoform 2.">
    <original>T</original>
    <variation>TS</variation>
    <location>
        <position position="226"/>
    </location>
</feature>
<feature type="splice variant" id="VSP_058224" description="In isoform 4.">
    <original>RETEFETKLNRQSRGQSHIQQDGIQHEKYASTEETFFCSRIREFHHIW</original>
    <variation>SSNDSSPSMTFLSVGKLNLKPNSIDRAVANLTFNKMESNMRNMPPPKRLSSVQG</variation>
    <location>
        <begin position="227"/>
        <end position="274"/>
    </location>
</feature>
<dbReference type="EMBL" id="AB010697">
    <property type="protein sequence ID" value="BAB11156.1"/>
    <property type="molecule type" value="Genomic_DNA"/>
</dbReference>
<dbReference type="EMBL" id="CP002688">
    <property type="protein sequence ID" value="AED91092.1"/>
    <property type="molecule type" value="Genomic_DNA"/>
</dbReference>
<dbReference type="EMBL" id="CP002688">
    <property type="protein sequence ID" value="AED91093.1"/>
    <property type="molecule type" value="Genomic_DNA"/>
</dbReference>
<dbReference type="EMBL" id="CP002688">
    <property type="protein sequence ID" value="AED91094.1"/>
    <property type="molecule type" value="Genomic_DNA"/>
</dbReference>
<dbReference type="EMBL" id="CP002688">
    <property type="protein sequence ID" value="AED91095.1"/>
    <property type="molecule type" value="Genomic_DNA"/>
</dbReference>
<dbReference type="EMBL" id="CP002688">
    <property type="protein sequence ID" value="ANM68815.1"/>
    <property type="molecule type" value="Genomic_DNA"/>
</dbReference>
<dbReference type="EMBL" id="AY063858">
    <property type="protein sequence ID" value="AAL36214.1"/>
    <property type="molecule type" value="mRNA"/>
</dbReference>
<dbReference type="EMBL" id="AY091310">
    <property type="protein sequence ID" value="AAM14249.1"/>
    <property type="molecule type" value="mRNA"/>
</dbReference>
<dbReference type="EMBL" id="AY042849">
    <property type="protein sequence ID" value="AAK68789.1"/>
    <property type="status" value="ALT_INIT"/>
    <property type="molecule type" value="mRNA"/>
</dbReference>
<dbReference type="EMBL" id="AY072472">
    <property type="protein sequence ID" value="AAL66887.1"/>
    <property type="molecule type" value="mRNA"/>
</dbReference>
<dbReference type="RefSeq" id="NP_001190245.1">
    <molecule id="Q9FL48-4"/>
    <property type="nucleotide sequence ID" value="NM_001203316.1"/>
</dbReference>
<dbReference type="RefSeq" id="NP_001190246.1">
    <molecule id="Q9FL48-3"/>
    <property type="nucleotide sequence ID" value="NM_001203317.1"/>
</dbReference>
<dbReference type="RefSeq" id="NP_001330537.1">
    <molecule id="Q9FL48-2"/>
    <property type="nucleotide sequence ID" value="NM_001342915.1"/>
</dbReference>
<dbReference type="RefSeq" id="NP_568176.1">
    <molecule id="Q9FL48-2"/>
    <property type="nucleotide sequence ID" value="NM_120780.4"/>
</dbReference>
<dbReference type="RefSeq" id="NP_850785.1">
    <molecule id="Q9FL48-1"/>
    <property type="nucleotide sequence ID" value="NM_180454.2"/>
</dbReference>
<dbReference type="FunCoup" id="Q9FL48">
    <property type="interactions" value="99"/>
</dbReference>
<dbReference type="STRING" id="3702.Q9FL48"/>
<dbReference type="iPTMnet" id="Q9FL48"/>
<dbReference type="PaxDb" id="3702-AT5G06980.4"/>
<dbReference type="ProteomicsDB" id="238629">
    <molecule id="Q9FL48-1"/>
</dbReference>
<dbReference type="EnsemblPlants" id="AT5G06980.1">
    <molecule id="Q9FL48-2"/>
    <property type="protein sequence ID" value="AT5G06980.1"/>
    <property type="gene ID" value="AT5G06980"/>
</dbReference>
<dbReference type="EnsemblPlants" id="AT5G06980.2">
    <molecule id="Q9FL48-1"/>
    <property type="protein sequence ID" value="AT5G06980.2"/>
    <property type="gene ID" value="AT5G06980"/>
</dbReference>
<dbReference type="EnsemblPlants" id="AT5G06980.3">
    <molecule id="Q9FL48-3"/>
    <property type="protein sequence ID" value="AT5G06980.3"/>
    <property type="gene ID" value="AT5G06980"/>
</dbReference>
<dbReference type="EnsemblPlants" id="AT5G06980.4">
    <molecule id="Q9FL48-4"/>
    <property type="protein sequence ID" value="AT5G06980.4"/>
    <property type="gene ID" value="AT5G06980"/>
</dbReference>
<dbReference type="EnsemblPlants" id="AT5G06980.5">
    <molecule id="Q9FL48-2"/>
    <property type="protein sequence ID" value="AT5G06980.5"/>
    <property type="gene ID" value="AT5G06980"/>
</dbReference>
<dbReference type="GeneID" id="830589"/>
<dbReference type="Gramene" id="AT5G06980.1">
    <molecule id="Q9FL48-2"/>
    <property type="protein sequence ID" value="AT5G06980.1"/>
    <property type="gene ID" value="AT5G06980"/>
</dbReference>
<dbReference type="Gramene" id="AT5G06980.2">
    <molecule id="Q9FL48-1"/>
    <property type="protein sequence ID" value="AT5G06980.2"/>
    <property type="gene ID" value="AT5G06980"/>
</dbReference>
<dbReference type="Gramene" id="AT5G06980.3">
    <molecule id="Q9FL48-3"/>
    <property type="protein sequence ID" value="AT5G06980.3"/>
    <property type="gene ID" value="AT5G06980"/>
</dbReference>
<dbReference type="Gramene" id="AT5G06980.4">
    <molecule id="Q9FL48-4"/>
    <property type="protein sequence ID" value="AT5G06980.4"/>
    <property type="gene ID" value="AT5G06980"/>
</dbReference>
<dbReference type="Gramene" id="AT5G06980.5">
    <molecule id="Q9FL48-2"/>
    <property type="protein sequence ID" value="AT5G06980.5"/>
    <property type="gene ID" value="AT5G06980"/>
</dbReference>
<dbReference type="KEGG" id="ath:AT5G06980"/>
<dbReference type="Araport" id="AT5G06980"/>
<dbReference type="TAIR" id="AT5G06980">
    <property type="gene designation" value="LNK4"/>
</dbReference>
<dbReference type="InParanoid" id="Q9FL48"/>
<dbReference type="OMA" id="WESHQEV"/>
<dbReference type="PhylomeDB" id="Q9FL48"/>
<dbReference type="PRO" id="PR:Q9FL48"/>
<dbReference type="Proteomes" id="UP000006548">
    <property type="component" value="Chromosome 5"/>
</dbReference>
<dbReference type="ExpressionAtlas" id="Q9FL48">
    <property type="expression patterns" value="baseline and differential"/>
</dbReference>
<dbReference type="GO" id="GO:0007623">
    <property type="term" value="P:circadian rhythm"/>
    <property type="evidence" value="ECO:0007669"/>
    <property type="project" value="InterPro"/>
</dbReference>
<dbReference type="GO" id="GO:0006355">
    <property type="term" value="P:regulation of DNA-templated transcription"/>
    <property type="evidence" value="ECO:0007669"/>
    <property type="project" value="InterPro"/>
</dbReference>
<dbReference type="InterPro" id="IPR039928">
    <property type="entry name" value="LNK"/>
</dbReference>
<dbReference type="PANTHER" id="PTHR33334">
    <property type="entry name" value="PROTEIN LNK1"/>
    <property type="match status" value="1"/>
</dbReference>
<dbReference type="PANTHER" id="PTHR33334:SF10">
    <property type="entry name" value="PROTEIN LNK4"/>
    <property type="match status" value="1"/>
</dbReference>
<name>LNK4_ARATH</name>
<gene>
    <name evidence="6" type="primary">LNK4</name>
    <name evidence="8" type="ordered locus">At5g06980</name>
    <name evidence="9" type="ORF">MOJ9.15</name>
</gene>